<gene>
    <name evidence="1" type="primary">fni</name>
    <name type="ordered locus">LCABL_17150</name>
</gene>
<sequence length="344" mass="37403">MTQSQQSHRKDEHVFLAEKYFQSVAHAGFDQVRLLHRALPETTMAAVDLKPDLPFNWQWPIYINAMTGGSPQTGKLNAQLGQLAQALGVAIASGSQSVALRDPQLVPTFATLRDHDPNGFILANVGAGHHATAAEAAVAMLKANALEIHLNAAQEVIMPEGDRDFMWQANIKSIIATSQVPIVVKEVGNGFIREDLQSLQQLGVQFVDVGGRGGTNFATIENARRSGHDFAYLQDWGQTTVESLLEARGLGLAMLATGGVRSPLDVVKALRLGAHAVGMSGLVLHHLIQTGYEATLAYFQNFLHQLRQLYALLGVTNWQELQEAPIVLSADLEHYRQARGLPGI</sequence>
<protein>
    <recommendedName>
        <fullName evidence="1">Isopentenyl-diphosphate delta-isomerase</fullName>
        <shortName evidence="1">IPP isomerase</shortName>
        <ecNumber evidence="1">5.3.3.2</ecNumber>
    </recommendedName>
    <alternativeName>
        <fullName evidence="1">Isopentenyl diphosphate:dimethylallyl diphosphate isomerase</fullName>
    </alternativeName>
    <alternativeName>
        <fullName evidence="1">Isopentenyl pyrophosphate isomerase</fullName>
    </alternativeName>
    <alternativeName>
        <fullName evidence="1">Type 2 isopentenyl diphosphate isomerase</fullName>
        <shortName evidence="1">IDI-2</shortName>
    </alternativeName>
</protein>
<dbReference type="EC" id="5.3.3.2" evidence="1"/>
<dbReference type="EMBL" id="FM177140">
    <property type="protein sequence ID" value="CAQ66796.1"/>
    <property type="molecule type" value="Genomic_DNA"/>
</dbReference>
<dbReference type="SMR" id="B3WEJ5"/>
<dbReference type="KEGG" id="lcb:LCABL_17150"/>
<dbReference type="HOGENOM" id="CLU_065515_0_0_9"/>
<dbReference type="GO" id="GO:0005737">
    <property type="term" value="C:cytoplasm"/>
    <property type="evidence" value="ECO:0007669"/>
    <property type="project" value="UniProtKB-SubCell"/>
</dbReference>
<dbReference type="GO" id="GO:0010181">
    <property type="term" value="F:FMN binding"/>
    <property type="evidence" value="ECO:0007669"/>
    <property type="project" value="UniProtKB-UniRule"/>
</dbReference>
<dbReference type="GO" id="GO:0004452">
    <property type="term" value="F:isopentenyl-diphosphate delta-isomerase activity"/>
    <property type="evidence" value="ECO:0007669"/>
    <property type="project" value="UniProtKB-UniRule"/>
</dbReference>
<dbReference type="GO" id="GO:0000287">
    <property type="term" value="F:magnesium ion binding"/>
    <property type="evidence" value="ECO:0007669"/>
    <property type="project" value="UniProtKB-UniRule"/>
</dbReference>
<dbReference type="GO" id="GO:0070402">
    <property type="term" value="F:NADPH binding"/>
    <property type="evidence" value="ECO:0007669"/>
    <property type="project" value="UniProtKB-UniRule"/>
</dbReference>
<dbReference type="GO" id="GO:0016491">
    <property type="term" value="F:oxidoreductase activity"/>
    <property type="evidence" value="ECO:0007669"/>
    <property type="project" value="InterPro"/>
</dbReference>
<dbReference type="GO" id="GO:0008299">
    <property type="term" value="P:isoprenoid biosynthetic process"/>
    <property type="evidence" value="ECO:0007669"/>
    <property type="project" value="UniProtKB-UniRule"/>
</dbReference>
<dbReference type="CDD" id="cd02811">
    <property type="entry name" value="IDI-2_FMN"/>
    <property type="match status" value="1"/>
</dbReference>
<dbReference type="Gene3D" id="3.20.20.70">
    <property type="entry name" value="Aldolase class I"/>
    <property type="match status" value="1"/>
</dbReference>
<dbReference type="HAMAP" id="MF_00354">
    <property type="entry name" value="Idi_2"/>
    <property type="match status" value="1"/>
</dbReference>
<dbReference type="InterPro" id="IPR013785">
    <property type="entry name" value="Aldolase_TIM"/>
</dbReference>
<dbReference type="InterPro" id="IPR000262">
    <property type="entry name" value="FMN-dep_DH"/>
</dbReference>
<dbReference type="InterPro" id="IPR011179">
    <property type="entry name" value="IPdP_isomerase"/>
</dbReference>
<dbReference type="NCBIfam" id="TIGR02151">
    <property type="entry name" value="IPP_isom_2"/>
    <property type="match status" value="1"/>
</dbReference>
<dbReference type="PANTHER" id="PTHR43665">
    <property type="entry name" value="ISOPENTENYL-DIPHOSPHATE DELTA-ISOMERASE"/>
    <property type="match status" value="1"/>
</dbReference>
<dbReference type="PANTHER" id="PTHR43665:SF1">
    <property type="entry name" value="ISOPENTENYL-DIPHOSPHATE DELTA-ISOMERASE"/>
    <property type="match status" value="1"/>
</dbReference>
<dbReference type="Pfam" id="PF01070">
    <property type="entry name" value="FMN_dh"/>
    <property type="match status" value="1"/>
</dbReference>
<dbReference type="PIRSF" id="PIRSF003314">
    <property type="entry name" value="IPP_isomerase"/>
    <property type="match status" value="1"/>
</dbReference>
<dbReference type="SUPFAM" id="SSF51395">
    <property type="entry name" value="FMN-linked oxidoreductases"/>
    <property type="match status" value="1"/>
</dbReference>
<feature type="chain" id="PRO_1000120543" description="Isopentenyl-diphosphate delta-isomerase">
    <location>
        <begin position="1"/>
        <end position="344"/>
    </location>
</feature>
<feature type="binding site" evidence="1">
    <location>
        <begin position="9"/>
        <end position="10"/>
    </location>
    <ligand>
        <name>substrate</name>
    </ligand>
</feature>
<feature type="binding site" evidence="1">
    <location>
        <begin position="65"/>
        <end position="67"/>
    </location>
    <ligand>
        <name>FMN</name>
        <dbReference type="ChEBI" id="CHEBI:58210"/>
    </ligand>
</feature>
<feature type="binding site" evidence="1">
    <location>
        <position position="95"/>
    </location>
    <ligand>
        <name>FMN</name>
        <dbReference type="ChEBI" id="CHEBI:58210"/>
    </ligand>
</feature>
<feature type="binding site" evidence="1">
    <location>
        <position position="124"/>
    </location>
    <ligand>
        <name>FMN</name>
        <dbReference type="ChEBI" id="CHEBI:58210"/>
    </ligand>
</feature>
<feature type="binding site" evidence="1">
    <location>
        <position position="154"/>
    </location>
    <ligand>
        <name>substrate</name>
    </ligand>
</feature>
<feature type="binding site" evidence="1">
    <location>
        <position position="155"/>
    </location>
    <ligand>
        <name>Mg(2+)</name>
        <dbReference type="ChEBI" id="CHEBI:18420"/>
    </ligand>
</feature>
<feature type="binding site" evidence="1">
    <location>
        <position position="185"/>
    </location>
    <ligand>
        <name>FMN</name>
        <dbReference type="ChEBI" id="CHEBI:58210"/>
    </ligand>
</feature>
<feature type="binding site" evidence="1">
    <location>
        <position position="215"/>
    </location>
    <ligand>
        <name>FMN</name>
        <dbReference type="ChEBI" id="CHEBI:58210"/>
    </ligand>
</feature>
<feature type="binding site" evidence="1">
    <location>
        <begin position="259"/>
        <end position="261"/>
    </location>
    <ligand>
        <name>FMN</name>
        <dbReference type="ChEBI" id="CHEBI:58210"/>
    </ligand>
</feature>
<feature type="binding site" evidence="1">
    <location>
        <begin position="280"/>
        <end position="281"/>
    </location>
    <ligand>
        <name>FMN</name>
        <dbReference type="ChEBI" id="CHEBI:58210"/>
    </ligand>
</feature>
<reference key="1">
    <citation type="submission" date="2008-06" db="EMBL/GenBank/DDBJ databases">
        <title>Lactobacillus casei BL23 complete genome sequence.</title>
        <authorList>
            <person name="Maze A."/>
            <person name="Boel G."/>
            <person name="Bourand A."/>
            <person name="Loux V."/>
            <person name="Gibrat J.F."/>
            <person name="Zuniga M."/>
            <person name="Hartke A."/>
            <person name="Deutscher J."/>
        </authorList>
    </citation>
    <scope>NUCLEOTIDE SEQUENCE [LARGE SCALE GENOMIC DNA]</scope>
    <source>
        <strain>BL23</strain>
    </source>
</reference>
<proteinExistence type="inferred from homology"/>
<accession>B3WEJ5</accession>
<name>IDI2_LACCB</name>
<comment type="function">
    <text evidence="1">Involved in the biosynthesis of isoprenoids. Catalyzes the 1,3-allylic rearrangement of the homoallylic substrate isopentenyl (IPP) to its allylic isomer, dimethylallyl diphosphate (DMAPP).</text>
</comment>
<comment type="catalytic activity">
    <reaction evidence="1">
        <text>isopentenyl diphosphate = dimethylallyl diphosphate</text>
        <dbReference type="Rhea" id="RHEA:23284"/>
        <dbReference type="ChEBI" id="CHEBI:57623"/>
        <dbReference type="ChEBI" id="CHEBI:128769"/>
        <dbReference type="EC" id="5.3.3.2"/>
    </reaction>
</comment>
<comment type="cofactor">
    <cofactor evidence="1">
        <name>FMN</name>
        <dbReference type="ChEBI" id="CHEBI:58210"/>
    </cofactor>
</comment>
<comment type="cofactor">
    <cofactor evidence="1">
        <name>NADPH</name>
        <dbReference type="ChEBI" id="CHEBI:57783"/>
    </cofactor>
</comment>
<comment type="cofactor">
    <cofactor evidence="1">
        <name>Mg(2+)</name>
        <dbReference type="ChEBI" id="CHEBI:18420"/>
    </cofactor>
</comment>
<comment type="subunit">
    <text evidence="1">Homooctamer. Dimer of tetramers.</text>
</comment>
<comment type="subcellular location">
    <subcellularLocation>
        <location evidence="1">Cytoplasm</location>
    </subcellularLocation>
</comment>
<comment type="similarity">
    <text evidence="1">Belongs to the IPP isomerase type 2 family.</text>
</comment>
<keyword id="KW-0963">Cytoplasm</keyword>
<keyword id="KW-0285">Flavoprotein</keyword>
<keyword id="KW-0288">FMN</keyword>
<keyword id="KW-0413">Isomerase</keyword>
<keyword id="KW-0414">Isoprene biosynthesis</keyword>
<keyword id="KW-0460">Magnesium</keyword>
<keyword id="KW-0479">Metal-binding</keyword>
<keyword id="KW-0521">NADP</keyword>
<organism>
    <name type="scientific">Lacticaseibacillus casei (strain BL23)</name>
    <name type="common">Lactobacillus casei</name>
    <dbReference type="NCBI Taxonomy" id="543734"/>
    <lineage>
        <taxon>Bacteria</taxon>
        <taxon>Bacillati</taxon>
        <taxon>Bacillota</taxon>
        <taxon>Bacilli</taxon>
        <taxon>Lactobacillales</taxon>
        <taxon>Lactobacillaceae</taxon>
        <taxon>Lacticaseibacillus</taxon>
    </lineage>
</organism>
<evidence type="ECO:0000255" key="1">
    <source>
        <dbReference type="HAMAP-Rule" id="MF_00354"/>
    </source>
</evidence>